<proteinExistence type="inferred from homology"/>
<dbReference type="EC" id="1.11.1.28" evidence="2"/>
<dbReference type="EMBL" id="CP000449">
    <property type="protein sequence ID" value="ABI67169.1"/>
    <property type="molecule type" value="Genomic_DNA"/>
</dbReference>
<dbReference type="RefSeq" id="WP_011644813.1">
    <property type="nucleotide sequence ID" value="NC_008347.1"/>
</dbReference>
<dbReference type="SMR" id="Q0AKM4"/>
<dbReference type="STRING" id="394221.Mmar10_2888"/>
<dbReference type="PeroxiBase" id="4630">
    <property type="entry name" value="MmaAhpD"/>
</dbReference>
<dbReference type="KEGG" id="mmr:Mmar10_2888"/>
<dbReference type="eggNOG" id="COG2128">
    <property type="taxonomic scope" value="Bacteria"/>
</dbReference>
<dbReference type="HOGENOM" id="CLU_105328_0_0_5"/>
<dbReference type="OrthoDB" id="9801997at2"/>
<dbReference type="Proteomes" id="UP000001964">
    <property type="component" value="Chromosome"/>
</dbReference>
<dbReference type="GO" id="GO:0008785">
    <property type="term" value="F:alkyl hydroperoxide reductase activity"/>
    <property type="evidence" value="ECO:0007669"/>
    <property type="project" value="UniProtKB-UniRule"/>
</dbReference>
<dbReference type="GO" id="GO:0015036">
    <property type="term" value="F:disulfide oxidoreductase activity"/>
    <property type="evidence" value="ECO:0007669"/>
    <property type="project" value="TreeGrafter"/>
</dbReference>
<dbReference type="GO" id="GO:0032843">
    <property type="term" value="F:hydroperoxide reductase activity"/>
    <property type="evidence" value="ECO:0007669"/>
    <property type="project" value="InterPro"/>
</dbReference>
<dbReference type="GO" id="GO:0051920">
    <property type="term" value="F:peroxiredoxin activity"/>
    <property type="evidence" value="ECO:0007669"/>
    <property type="project" value="InterPro"/>
</dbReference>
<dbReference type="GO" id="GO:0045454">
    <property type="term" value="P:cell redox homeostasis"/>
    <property type="evidence" value="ECO:0007669"/>
    <property type="project" value="TreeGrafter"/>
</dbReference>
<dbReference type="GO" id="GO:0006979">
    <property type="term" value="P:response to oxidative stress"/>
    <property type="evidence" value="ECO:0007669"/>
    <property type="project" value="InterPro"/>
</dbReference>
<dbReference type="Gene3D" id="1.20.1290.10">
    <property type="entry name" value="AhpD-like"/>
    <property type="match status" value="1"/>
</dbReference>
<dbReference type="HAMAP" id="MF_01676">
    <property type="entry name" value="AhpD"/>
    <property type="match status" value="1"/>
</dbReference>
<dbReference type="InterPro" id="IPR004674">
    <property type="entry name" value="AhpD"/>
</dbReference>
<dbReference type="InterPro" id="IPR029032">
    <property type="entry name" value="AhpD-like"/>
</dbReference>
<dbReference type="InterPro" id="IPR004675">
    <property type="entry name" value="AhpD_core"/>
</dbReference>
<dbReference type="InterPro" id="IPR003779">
    <property type="entry name" value="CMD-like"/>
</dbReference>
<dbReference type="NCBIfam" id="TIGR00777">
    <property type="entry name" value="ahpD"/>
    <property type="match status" value="1"/>
</dbReference>
<dbReference type="NCBIfam" id="TIGR00778">
    <property type="entry name" value="ahpD_dom"/>
    <property type="match status" value="1"/>
</dbReference>
<dbReference type="PANTHER" id="PTHR33930">
    <property type="entry name" value="ALKYL HYDROPEROXIDE REDUCTASE AHPD"/>
    <property type="match status" value="1"/>
</dbReference>
<dbReference type="PANTHER" id="PTHR33930:SF7">
    <property type="entry name" value="ALKYL HYDROPEROXIDE REDUCTASE AHPD"/>
    <property type="match status" value="1"/>
</dbReference>
<dbReference type="Pfam" id="PF02627">
    <property type="entry name" value="CMD"/>
    <property type="match status" value="1"/>
</dbReference>
<dbReference type="SUPFAM" id="SSF69118">
    <property type="entry name" value="AhpD-like"/>
    <property type="match status" value="1"/>
</dbReference>
<gene>
    <name evidence="2" type="primary">ahpD</name>
    <name type="ordered locus">Mmar10_2888</name>
</gene>
<evidence type="ECO:0000250" key="1"/>
<evidence type="ECO:0000255" key="2">
    <source>
        <dbReference type="HAMAP-Rule" id="MF_01676"/>
    </source>
</evidence>
<protein>
    <recommendedName>
        <fullName evidence="2">Alkyl hydroperoxide reductase AhpD</fullName>
        <ecNumber evidence="2">1.11.1.28</ecNumber>
    </recommendedName>
    <alternativeName>
        <fullName evidence="2">Alkylhydroperoxidase AhpD</fullName>
    </alternativeName>
</protein>
<reference key="1">
    <citation type="submission" date="2006-08" db="EMBL/GenBank/DDBJ databases">
        <title>Complete sequence of Maricaulis maris MCS10.</title>
        <authorList>
            <consortium name="US DOE Joint Genome Institute"/>
            <person name="Copeland A."/>
            <person name="Lucas S."/>
            <person name="Lapidus A."/>
            <person name="Barry K."/>
            <person name="Detter J.C."/>
            <person name="Glavina del Rio T."/>
            <person name="Hammon N."/>
            <person name="Israni S."/>
            <person name="Dalin E."/>
            <person name="Tice H."/>
            <person name="Pitluck S."/>
            <person name="Saunders E."/>
            <person name="Brettin T."/>
            <person name="Bruce D."/>
            <person name="Han C."/>
            <person name="Tapia R."/>
            <person name="Gilna P."/>
            <person name="Schmutz J."/>
            <person name="Larimer F."/>
            <person name="Land M."/>
            <person name="Hauser L."/>
            <person name="Kyrpides N."/>
            <person name="Mikhailova N."/>
            <person name="Viollier P."/>
            <person name="Stephens C."/>
            <person name="Richardson P."/>
        </authorList>
    </citation>
    <scope>NUCLEOTIDE SEQUENCE [LARGE SCALE GENOMIC DNA]</scope>
    <source>
        <strain>MCS10</strain>
    </source>
</reference>
<name>AHPD_MARMM</name>
<feature type="chain" id="PRO_0000359493" description="Alkyl hydroperoxide reductase AhpD">
    <location>
        <begin position="1"/>
        <end position="173"/>
    </location>
</feature>
<feature type="active site" description="Proton donor" evidence="2">
    <location>
        <position position="131"/>
    </location>
</feature>
<feature type="active site" description="Cysteine sulfenic acid (-SOH) intermediate" evidence="2">
    <location>
        <position position="134"/>
    </location>
</feature>
<feature type="disulfide bond" evidence="1">
    <location>
        <begin position="131"/>
        <end position="134"/>
    </location>
</feature>
<feature type="disulfide bond" description="Interchain (with AhpC); in linked form" evidence="2">
    <location>
        <position position="134"/>
    </location>
</feature>
<sequence>MSIDALKNELPEYAKDLKLNLSSLGRETELDDQKKWGTFLASAHAVGEPKTLAAIKAEAETRLSDEALTAAKAASAIMGMNNVYYRFVHLSKNKEYATLPAKLRMNILANPGVDKADFELWSLAVSAINGCGLCIDSHEAELRKHGLTTTQVQAAVRIAATVNAIAAVLAAES</sequence>
<comment type="function">
    <text evidence="2">Antioxidant protein with alkyl hydroperoxidase activity. Required for the reduction of the AhpC active site cysteine residues and for the regeneration of the AhpC enzyme activity.</text>
</comment>
<comment type="catalytic activity">
    <reaction evidence="2">
        <text>N(6)-[(R)-dihydrolipoyl]-L-lysyl-[lipoyl-carrier protein] + a hydroperoxide = N(6)-[(R)-lipoyl]-L-lysyl-[lipoyl-carrier protein] + an alcohol + H2O</text>
        <dbReference type="Rhea" id="RHEA:62636"/>
        <dbReference type="Rhea" id="RHEA-COMP:10502"/>
        <dbReference type="Rhea" id="RHEA-COMP:16355"/>
        <dbReference type="ChEBI" id="CHEBI:15377"/>
        <dbReference type="ChEBI" id="CHEBI:30879"/>
        <dbReference type="ChEBI" id="CHEBI:35924"/>
        <dbReference type="ChEBI" id="CHEBI:83099"/>
        <dbReference type="ChEBI" id="CHEBI:83100"/>
        <dbReference type="EC" id="1.11.1.28"/>
    </reaction>
</comment>
<comment type="similarity">
    <text evidence="2">Belongs to the AhpD family.</text>
</comment>
<accession>Q0AKM4</accession>
<keyword id="KW-0049">Antioxidant</keyword>
<keyword id="KW-1015">Disulfide bond</keyword>
<keyword id="KW-0560">Oxidoreductase</keyword>
<keyword id="KW-0575">Peroxidase</keyword>
<keyword id="KW-0676">Redox-active center</keyword>
<keyword id="KW-1185">Reference proteome</keyword>
<organism>
    <name type="scientific">Maricaulis maris (strain MCS10)</name>
    <name type="common">Caulobacter maris</name>
    <dbReference type="NCBI Taxonomy" id="394221"/>
    <lineage>
        <taxon>Bacteria</taxon>
        <taxon>Pseudomonadati</taxon>
        <taxon>Pseudomonadota</taxon>
        <taxon>Alphaproteobacteria</taxon>
        <taxon>Maricaulales</taxon>
        <taxon>Maricaulaceae</taxon>
        <taxon>Maricaulis</taxon>
    </lineage>
</organism>